<proteinExistence type="inferred from homology"/>
<gene>
    <name evidence="1" type="primary">mutS2</name>
    <name evidence="1" type="synonym">rqcU</name>
    <name type="ordered locus">LGAS_0426</name>
</gene>
<dbReference type="EC" id="3.1.-.-" evidence="1"/>
<dbReference type="EC" id="3.6.4.-" evidence="1"/>
<dbReference type="EMBL" id="CP000413">
    <property type="protein sequence ID" value="ABJ59831.1"/>
    <property type="molecule type" value="Genomic_DNA"/>
</dbReference>
<dbReference type="SMR" id="Q045P1"/>
<dbReference type="KEGG" id="lga:LGAS_0426"/>
<dbReference type="HOGENOM" id="CLU_011252_2_1_9"/>
<dbReference type="Proteomes" id="UP000000664">
    <property type="component" value="Chromosome"/>
</dbReference>
<dbReference type="GO" id="GO:0005524">
    <property type="term" value="F:ATP binding"/>
    <property type="evidence" value="ECO:0007669"/>
    <property type="project" value="UniProtKB-UniRule"/>
</dbReference>
<dbReference type="GO" id="GO:0016887">
    <property type="term" value="F:ATP hydrolysis activity"/>
    <property type="evidence" value="ECO:0007669"/>
    <property type="project" value="InterPro"/>
</dbReference>
<dbReference type="GO" id="GO:0140664">
    <property type="term" value="F:ATP-dependent DNA damage sensor activity"/>
    <property type="evidence" value="ECO:0007669"/>
    <property type="project" value="InterPro"/>
</dbReference>
<dbReference type="GO" id="GO:0004519">
    <property type="term" value="F:endonuclease activity"/>
    <property type="evidence" value="ECO:0007669"/>
    <property type="project" value="UniProtKB-UniRule"/>
</dbReference>
<dbReference type="GO" id="GO:0030983">
    <property type="term" value="F:mismatched DNA binding"/>
    <property type="evidence" value="ECO:0007669"/>
    <property type="project" value="InterPro"/>
</dbReference>
<dbReference type="GO" id="GO:0043023">
    <property type="term" value="F:ribosomal large subunit binding"/>
    <property type="evidence" value="ECO:0007669"/>
    <property type="project" value="UniProtKB-UniRule"/>
</dbReference>
<dbReference type="GO" id="GO:0019843">
    <property type="term" value="F:rRNA binding"/>
    <property type="evidence" value="ECO:0007669"/>
    <property type="project" value="UniProtKB-UniRule"/>
</dbReference>
<dbReference type="GO" id="GO:0006298">
    <property type="term" value="P:mismatch repair"/>
    <property type="evidence" value="ECO:0007669"/>
    <property type="project" value="InterPro"/>
</dbReference>
<dbReference type="GO" id="GO:0045910">
    <property type="term" value="P:negative regulation of DNA recombination"/>
    <property type="evidence" value="ECO:0007669"/>
    <property type="project" value="InterPro"/>
</dbReference>
<dbReference type="GO" id="GO:0072344">
    <property type="term" value="P:rescue of stalled ribosome"/>
    <property type="evidence" value="ECO:0007669"/>
    <property type="project" value="UniProtKB-UniRule"/>
</dbReference>
<dbReference type="CDD" id="cd03280">
    <property type="entry name" value="ABC_MutS2"/>
    <property type="match status" value="1"/>
</dbReference>
<dbReference type="FunFam" id="3.40.50.300:FF:000830">
    <property type="entry name" value="Endonuclease MutS2"/>
    <property type="match status" value="1"/>
</dbReference>
<dbReference type="Gene3D" id="3.30.1370.110">
    <property type="match status" value="1"/>
</dbReference>
<dbReference type="Gene3D" id="3.40.50.300">
    <property type="entry name" value="P-loop containing nucleotide triphosphate hydrolases"/>
    <property type="match status" value="1"/>
</dbReference>
<dbReference type="HAMAP" id="MF_00092">
    <property type="entry name" value="MutS2"/>
    <property type="match status" value="1"/>
</dbReference>
<dbReference type="InterPro" id="IPR000432">
    <property type="entry name" value="DNA_mismatch_repair_MutS_C"/>
</dbReference>
<dbReference type="InterPro" id="IPR007696">
    <property type="entry name" value="DNA_mismatch_repair_MutS_core"/>
</dbReference>
<dbReference type="InterPro" id="IPR036187">
    <property type="entry name" value="DNA_mismatch_repair_MutS_sf"/>
</dbReference>
<dbReference type="InterPro" id="IPR046893">
    <property type="entry name" value="MSSS"/>
</dbReference>
<dbReference type="InterPro" id="IPR045076">
    <property type="entry name" value="MutS"/>
</dbReference>
<dbReference type="InterPro" id="IPR005747">
    <property type="entry name" value="MutS2"/>
</dbReference>
<dbReference type="InterPro" id="IPR027417">
    <property type="entry name" value="P-loop_NTPase"/>
</dbReference>
<dbReference type="InterPro" id="IPR002625">
    <property type="entry name" value="Smr_dom"/>
</dbReference>
<dbReference type="InterPro" id="IPR036063">
    <property type="entry name" value="Smr_dom_sf"/>
</dbReference>
<dbReference type="NCBIfam" id="TIGR01069">
    <property type="entry name" value="mutS2"/>
    <property type="match status" value="1"/>
</dbReference>
<dbReference type="PANTHER" id="PTHR48466:SF2">
    <property type="entry name" value="OS10G0509000 PROTEIN"/>
    <property type="match status" value="1"/>
</dbReference>
<dbReference type="PANTHER" id="PTHR48466">
    <property type="entry name" value="OS10G0509000 PROTEIN-RELATED"/>
    <property type="match status" value="1"/>
</dbReference>
<dbReference type="Pfam" id="PF20297">
    <property type="entry name" value="MSSS"/>
    <property type="match status" value="1"/>
</dbReference>
<dbReference type="Pfam" id="PF00488">
    <property type="entry name" value="MutS_V"/>
    <property type="match status" value="1"/>
</dbReference>
<dbReference type="Pfam" id="PF01713">
    <property type="entry name" value="Smr"/>
    <property type="match status" value="1"/>
</dbReference>
<dbReference type="PIRSF" id="PIRSF005814">
    <property type="entry name" value="MutS_YshD"/>
    <property type="match status" value="1"/>
</dbReference>
<dbReference type="SMART" id="SM00534">
    <property type="entry name" value="MUTSac"/>
    <property type="match status" value="1"/>
</dbReference>
<dbReference type="SMART" id="SM00533">
    <property type="entry name" value="MUTSd"/>
    <property type="match status" value="1"/>
</dbReference>
<dbReference type="SMART" id="SM00463">
    <property type="entry name" value="SMR"/>
    <property type="match status" value="1"/>
</dbReference>
<dbReference type="SUPFAM" id="SSF48334">
    <property type="entry name" value="DNA repair protein MutS, domain III"/>
    <property type="match status" value="1"/>
</dbReference>
<dbReference type="SUPFAM" id="SSF52540">
    <property type="entry name" value="P-loop containing nucleoside triphosphate hydrolases"/>
    <property type="match status" value="1"/>
</dbReference>
<dbReference type="SUPFAM" id="SSF160443">
    <property type="entry name" value="SMR domain-like"/>
    <property type="match status" value="1"/>
</dbReference>
<dbReference type="PROSITE" id="PS50828">
    <property type="entry name" value="SMR"/>
    <property type="match status" value="1"/>
</dbReference>
<organism>
    <name type="scientific">Lactobacillus gasseri (strain ATCC 33323 / DSM 20243 / BCRC 14619 / CIP 102991 / JCM 1131 / KCTC 3163 / NCIMB 11718 / NCTC 13722 / AM63)</name>
    <dbReference type="NCBI Taxonomy" id="324831"/>
    <lineage>
        <taxon>Bacteria</taxon>
        <taxon>Bacillati</taxon>
        <taxon>Bacillota</taxon>
        <taxon>Bacilli</taxon>
        <taxon>Lactobacillales</taxon>
        <taxon>Lactobacillaceae</taxon>
        <taxon>Lactobacillus</taxon>
    </lineage>
</organism>
<feature type="chain" id="PRO_1000093364" description="Endonuclease MutS2">
    <location>
        <begin position="1"/>
        <end position="791"/>
    </location>
</feature>
<feature type="domain" description="Smr" evidence="1">
    <location>
        <begin position="716"/>
        <end position="791"/>
    </location>
</feature>
<feature type="region of interest" description="Disordered" evidence="2">
    <location>
        <begin position="689"/>
        <end position="715"/>
    </location>
</feature>
<feature type="compositionally biased region" description="Low complexity" evidence="2">
    <location>
        <begin position="703"/>
        <end position="713"/>
    </location>
</feature>
<feature type="binding site" evidence="1">
    <location>
        <begin position="337"/>
        <end position="344"/>
    </location>
    <ligand>
        <name>ATP</name>
        <dbReference type="ChEBI" id="CHEBI:30616"/>
    </ligand>
</feature>
<comment type="function">
    <text evidence="1">Endonuclease that is involved in the suppression of homologous recombination and thus may have a key role in the control of bacterial genetic diversity.</text>
</comment>
<comment type="function">
    <text evidence="1">Acts as a ribosome collision sensor, splitting the ribosome into its 2 subunits. Detects stalled/collided 70S ribosomes which it binds and splits by an ATP-hydrolysis driven conformational change. Acts upstream of the ribosome quality control system (RQC), a ribosome-associated complex that mediates the extraction of incompletely synthesized nascent chains from stalled ribosomes and their subsequent degradation. Probably generates substrates for RQC.</text>
</comment>
<comment type="subunit">
    <text evidence="1">Homodimer. Binds to stalled ribosomes, contacting rRNA.</text>
</comment>
<comment type="similarity">
    <text evidence="1">Belongs to the DNA mismatch repair MutS family. MutS2 subfamily.</text>
</comment>
<name>MUTS2_LACGA</name>
<evidence type="ECO:0000255" key="1">
    <source>
        <dbReference type="HAMAP-Rule" id="MF_00092"/>
    </source>
</evidence>
<evidence type="ECO:0000256" key="2">
    <source>
        <dbReference type="SAM" id="MobiDB-lite"/>
    </source>
</evidence>
<accession>Q045P1</accession>
<keyword id="KW-0067">ATP-binding</keyword>
<keyword id="KW-0238">DNA-binding</keyword>
<keyword id="KW-0255">Endonuclease</keyword>
<keyword id="KW-0378">Hydrolase</keyword>
<keyword id="KW-0540">Nuclease</keyword>
<keyword id="KW-0547">Nucleotide-binding</keyword>
<keyword id="KW-0694">RNA-binding</keyword>
<keyword id="KW-0699">rRNA-binding</keyword>
<sequence>MEDMNSKIIEKLEYNRIIRQLSDLAITAPAKAQALKLMPSSDFDEVKKSIDQTRVLSNILRVKGPMPITDFKDVRPSLKRLKVKANLNGEELGNIFLVLSLAKDVGQFASDLEEREIDTRPIEKYLKNLAVPEDLFKKLNQAIEYDGTVKDTASSKLMQLRHDIQSNETDIKNHMNDYISGKHTQYLSENIVTIRDGRYVLPVKQEYKNKFGGVVHDQSASGQTLFVEPQAVLVLNNRQQNLLAQERQEIHRILIELSELAGAYQKEINNNALALTQLDFLSAKSKLAKKMKATEPVLNQDHIIKLRKARHPLIDPKKVVPNNIELGTTFDTMLITGPNTGGKTITLKTLGLLQLMAQAGLFITAEEGSQLTVFNEIYADIGDEQSIEQSLSTFSSHMDQIIKIMNNVTEDDLVLIDELGAGTDPEEGASLAIAILDDLRQTQAKIAITTHYPELKLYGYNRKRTTNASMEFDLKKLAPTYRLRIGIPGQSNAFAIAHQLGMNEAVVDKARDLMNDEDSDINKMIERLTEQTKAAEQLHETLKQNVDQSITLKRQLQNGLDWYNQQVQKQLEKSQEKADEMLAKKRKQAEKIINDLEEQRRAGGQVRTNKVIEAKGALNKLERENQNLANNKVLQREKKRHDVSVGDNVKVLSYGQQGVITKKLGEHEFEVQIGILKVKVTDRDVEKIAAQASQKKPEKSVRSSRGLRSSRASSELDLRGQRYEEALTNLDRYLDASLLAGLNTVTIIHGIGTGAIRNGVQQYLKRNRHVKSYNYAPANQGGTGATIVNLQ</sequence>
<protein>
    <recommendedName>
        <fullName evidence="1">Endonuclease MutS2</fullName>
        <ecNumber evidence="1">3.1.-.-</ecNumber>
    </recommendedName>
    <alternativeName>
        <fullName evidence="1">Ribosome-associated protein quality control-upstream factor</fullName>
        <shortName evidence="1">RQC-upstream factor</shortName>
        <shortName evidence="1">RqcU</shortName>
        <ecNumber evidence="1">3.6.4.-</ecNumber>
    </alternativeName>
</protein>
<reference key="1">
    <citation type="journal article" date="2006" name="Proc. Natl. Acad. Sci. U.S.A.">
        <title>Comparative genomics of the lactic acid bacteria.</title>
        <authorList>
            <person name="Makarova K.S."/>
            <person name="Slesarev A."/>
            <person name="Wolf Y.I."/>
            <person name="Sorokin A."/>
            <person name="Mirkin B."/>
            <person name="Koonin E.V."/>
            <person name="Pavlov A."/>
            <person name="Pavlova N."/>
            <person name="Karamychev V."/>
            <person name="Polouchine N."/>
            <person name="Shakhova V."/>
            <person name="Grigoriev I."/>
            <person name="Lou Y."/>
            <person name="Rohksar D."/>
            <person name="Lucas S."/>
            <person name="Huang K."/>
            <person name="Goodstein D.M."/>
            <person name="Hawkins T."/>
            <person name="Plengvidhya V."/>
            <person name="Welker D."/>
            <person name="Hughes J."/>
            <person name="Goh Y."/>
            <person name="Benson A."/>
            <person name="Baldwin K."/>
            <person name="Lee J.-H."/>
            <person name="Diaz-Muniz I."/>
            <person name="Dosti B."/>
            <person name="Smeianov V."/>
            <person name="Wechter W."/>
            <person name="Barabote R."/>
            <person name="Lorca G."/>
            <person name="Altermann E."/>
            <person name="Barrangou R."/>
            <person name="Ganesan B."/>
            <person name="Xie Y."/>
            <person name="Rawsthorne H."/>
            <person name="Tamir D."/>
            <person name="Parker C."/>
            <person name="Breidt F."/>
            <person name="Broadbent J.R."/>
            <person name="Hutkins R."/>
            <person name="O'Sullivan D."/>
            <person name="Steele J."/>
            <person name="Unlu G."/>
            <person name="Saier M.H. Jr."/>
            <person name="Klaenhammer T."/>
            <person name="Richardson P."/>
            <person name="Kozyavkin S."/>
            <person name="Weimer B.C."/>
            <person name="Mills D.A."/>
        </authorList>
    </citation>
    <scope>NUCLEOTIDE SEQUENCE [LARGE SCALE GENOMIC DNA]</scope>
    <source>
        <strain>ATCC 33323 / DSM 20243 / BCRC 14619 / CIP 102991 / JCM 1131 / KCTC 3163 / NCIMB 11718 / NCTC 13722 / AM63</strain>
    </source>
</reference>